<dbReference type="EMBL" id="U04632">
    <property type="protein sequence ID" value="AAA20836.1"/>
    <property type="molecule type" value="mRNA"/>
</dbReference>
<dbReference type="SMR" id="P43643"/>
<dbReference type="STRING" id="4097.P43643"/>
<dbReference type="PaxDb" id="4097-P43643"/>
<dbReference type="Proteomes" id="UP000084051">
    <property type="component" value="Unplaced"/>
</dbReference>
<dbReference type="GO" id="GO:0005737">
    <property type="term" value="C:cytoplasm"/>
    <property type="evidence" value="ECO:0007669"/>
    <property type="project" value="UniProtKB-SubCell"/>
</dbReference>
<dbReference type="GO" id="GO:0005525">
    <property type="term" value="F:GTP binding"/>
    <property type="evidence" value="ECO:0007669"/>
    <property type="project" value="UniProtKB-KW"/>
</dbReference>
<dbReference type="GO" id="GO:0003924">
    <property type="term" value="F:GTPase activity"/>
    <property type="evidence" value="ECO:0000318"/>
    <property type="project" value="GO_Central"/>
</dbReference>
<dbReference type="GO" id="GO:0003746">
    <property type="term" value="F:translation elongation factor activity"/>
    <property type="evidence" value="ECO:0000318"/>
    <property type="project" value="GO_Central"/>
</dbReference>
<dbReference type="GO" id="GO:0006412">
    <property type="term" value="P:translation"/>
    <property type="evidence" value="ECO:0000318"/>
    <property type="project" value="GO_Central"/>
</dbReference>
<dbReference type="GO" id="GO:0006414">
    <property type="term" value="P:translational elongation"/>
    <property type="evidence" value="ECO:0000318"/>
    <property type="project" value="GO_Central"/>
</dbReference>
<dbReference type="CDD" id="cd01883">
    <property type="entry name" value="EF1_alpha"/>
    <property type="match status" value="1"/>
</dbReference>
<dbReference type="CDD" id="cd03693">
    <property type="entry name" value="EF1_alpha_II"/>
    <property type="match status" value="1"/>
</dbReference>
<dbReference type="CDD" id="cd03705">
    <property type="entry name" value="EF1_alpha_III"/>
    <property type="match status" value="1"/>
</dbReference>
<dbReference type="FunFam" id="2.40.30.10:FF:000003">
    <property type="entry name" value="Elongation factor 1-alpha"/>
    <property type="match status" value="1"/>
</dbReference>
<dbReference type="FunFam" id="2.40.30.10:FF:000005">
    <property type="entry name" value="Elongation factor 1-alpha"/>
    <property type="match status" value="1"/>
</dbReference>
<dbReference type="FunFam" id="3.40.50.300:FF:000255">
    <property type="entry name" value="Elongation factor 1-alpha"/>
    <property type="match status" value="1"/>
</dbReference>
<dbReference type="Gene3D" id="3.40.50.300">
    <property type="entry name" value="P-loop containing nucleotide triphosphate hydrolases"/>
    <property type="match status" value="1"/>
</dbReference>
<dbReference type="Gene3D" id="2.40.30.10">
    <property type="entry name" value="Translation factors"/>
    <property type="match status" value="2"/>
</dbReference>
<dbReference type="HAMAP" id="MF_00118_A">
    <property type="entry name" value="EF_Tu_A"/>
    <property type="match status" value="1"/>
</dbReference>
<dbReference type="InterPro" id="IPR004161">
    <property type="entry name" value="EFTu-like_2"/>
</dbReference>
<dbReference type="InterPro" id="IPR031157">
    <property type="entry name" value="G_TR_CS"/>
</dbReference>
<dbReference type="InterPro" id="IPR054696">
    <property type="entry name" value="GTP-eEF1A_C"/>
</dbReference>
<dbReference type="InterPro" id="IPR027417">
    <property type="entry name" value="P-loop_NTPase"/>
</dbReference>
<dbReference type="InterPro" id="IPR000795">
    <property type="entry name" value="T_Tr_GTP-bd_dom"/>
</dbReference>
<dbReference type="InterPro" id="IPR050100">
    <property type="entry name" value="TRAFAC_GTPase_members"/>
</dbReference>
<dbReference type="InterPro" id="IPR009000">
    <property type="entry name" value="Transl_B-barrel_sf"/>
</dbReference>
<dbReference type="InterPro" id="IPR009001">
    <property type="entry name" value="Transl_elong_EF1A/Init_IF2_C"/>
</dbReference>
<dbReference type="InterPro" id="IPR004539">
    <property type="entry name" value="Transl_elong_EF1A_euk/arc"/>
</dbReference>
<dbReference type="NCBIfam" id="TIGR00483">
    <property type="entry name" value="EF-1_alpha"/>
    <property type="match status" value="1"/>
</dbReference>
<dbReference type="NCBIfam" id="NF008969">
    <property type="entry name" value="PRK12317.1"/>
    <property type="match status" value="1"/>
</dbReference>
<dbReference type="PANTHER" id="PTHR23115">
    <property type="entry name" value="TRANSLATION FACTOR"/>
    <property type="match status" value="1"/>
</dbReference>
<dbReference type="Pfam" id="PF22594">
    <property type="entry name" value="GTP-eEF1A_C"/>
    <property type="match status" value="1"/>
</dbReference>
<dbReference type="Pfam" id="PF00009">
    <property type="entry name" value="GTP_EFTU"/>
    <property type="match status" value="1"/>
</dbReference>
<dbReference type="Pfam" id="PF03144">
    <property type="entry name" value="GTP_EFTU_D2"/>
    <property type="match status" value="1"/>
</dbReference>
<dbReference type="PRINTS" id="PR00315">
    <property type="entry name" value="ELONGATNFCT"/>
</dbReference>
<dbReference type="SUPFAM" id="SSF50465">
    <property type="entry name" value="EF-Tu/eEF-1alpha/eIF2-gamma C-terminal domain"/>
    <property type="match status" value="1"/>
</dbReference>
<dbReference type="SUPFAM" id="SSF52540">
    <property type="entry name" value="P-loop containing nucleoside triphosphate hydrolases"/>
    <property type="match status" value="1"/>
</dbReference>
<dbReference type="SUPFAM" id="SSF50447">
    <property type="entry name" value="Translation proteins"/>
    <property type="match status" value="1"/>
</dbReference>
<dbReference type="PROSITE" id="PS00301">
    <property type="entry name" value="G_TR_1"/>
    <property type="match status" value="1"/>
</dbReference>
<dbReference type="PROSITE" id="PS51722">
    <property type="entry name" value="G_TR_2"/>
    <property type="match status" value="1"/>
</dbReference>
<reference key="1">
    <citation type="journal article" date="1994" name="Plant Cell">
        <title>A higher plant extracellular vitronectin-like adhesion protein is related to the translational elongation factor-1 alpha.</title>
        <authorList>
            <person name="Zhu J.K."/>
            <person name="Damsz B."/>
            <person name="Kononowicz A.K."/>
            <person name="Bressan R.A."/>
            <person name="Hasegawa P.M."/>
        </authorList>
    </citation>
    <scope>NUCLEOTIDE SEQUENCE [MRNA]</scope>
    <scope>SUBCELLULAR LOCATION</scope>
    <source>
        <strain>cv. Wisconsin 38</strain>
    </source>
</reference>
<feature type="chain" id="PRO_0000090946" description="Elongation factor 1-alpha">
    <location>
        <begin position="1"/>
        <end position="447"/>
    </location>
</feature>
<feature type="domain" description="tr-type G">
    <location>
        <begin position="5"/>
        <end position="230"/>
    </location>
</feature>
<feature type="region of interest" description="G1" evidence="1">
    <location>
        <begin position="14"/>
        <end position="21"/>
    </location>
</feature>
<feature type="region of interest" description="G2" evidence="1">
    <location>
        <begin position="70"/>
        <end position="74"/>
    </location>
</feature>
<feature type="region of interest" description="G3" evidence="1">
    <location>
        <begin position="91"/>
        <end position="94"/>
    </location>
</feature>
<feature type="region of interest" description="G4" evidence="1">
    <location>
        <begin position="153"/>
        <end position="156"/>
    </location>
</feature>
<feature type="region of interest" description="G5" evidence="1">
    <location>
        <begin position="194"/>
        <end position="196"/>
    </location>
</feature>
<feature type="binding site" evidence="1">
    <location>
        <begin position="14"/>
        <end position="21"/>
    </location>
    <ligand>
        <name>GTP</name>
        <dbReference type="ChEBI" id="CHEBI:37565"/>
    </ligand>
</feature>
<feature type="binding site" evidence="1">
    <location>
        <begin position="91"/>
        <end position="95"/>
    </location>
    <ligand>
        <name>GTP</name>
        <dbReference type="ChEBI" id="CHEBI:37565"/>
    </ligand>
</feature>
<feature type="binding site" evidence="1">
    <location>
        <begin position="153"/>
        <end position="156"/>
    </location>
    <ligand>
        <name>GTP</name>
        <dbReference type="ChEBI" id="CHEBI:37565"/>
    </ligand>
</feature>
<feature type="modified residue" description="N6,N6-dimethyllysine" evidence="2">
    <location>
        <position position="55"/>
    </location>
</feature>
<feature type="modified residue" description="N6,N6,N6-trimethyllysine" evidence="2">
    <location>
        <position position="79"/>
    </location>
</feature>
<feature type="modified residue" description="N6,N6,N6-trimethyllysine" evidence="2">
    <location>
        <position position="187"/>
    </location>
</feature>
<feature type="modified residue" description="N6-methyllysine" evidence="2">
    <location>
        <position position="261"/>
    </location>
</feature>
<feature type="modified residue" description="5-glutamyl glycerylphosphorylethanolamine" evidence="1">
    <location>
        <position position="289"/>
    </location>
</feature>
<feature type="modified residue" description="N6,N6,N6-trimethyllysine" evidence="2">
    <location>
        <position position="306"/>
    </location>
</feature>
<feature type="modified residue" description="5-glutamyl glycerylphosphorylethanolamine" evidence="1">
    <location>
        <position position="362"/>
    </location>
</feature>
<feature type="modified residue" description="N6,N6,N6-trimethyllysine" evidence="2">
    <location>
        <position position="396"/>
    </location>
</feature>
<keyword id="KW-0963">Cytoplasm</keyword>
<keyword id="KW-0251">Elongation factor</keyword>
<keyword id="KW-0342">GTP-binding</keyword>
<keyword id="KW-0488">Methylation</keyword>
<keyword id="KW-0547">Nucleotide-binding</keyword>
<keyword id="KW-0597">Phosphoprotein</keyword>
<keyword id="KW-0648">Protein biosynthesis</keyword>
<keyword id="KW-1185">Reference proteome</keyword>
<proteinExistence type="evidence at transcript level"/>
<sequence length="447" mass="49282">MGKEKFHINIVVIGHVDSGKSTTTGHLIYKLGGIDKRVIERFEKEAAEMNKRSFKYAWVLDKLKAERERGITIDIALWKFETTKYYCTVIDAPGHRDFIKNMITGTSQADCAVLIIDSTTGGFEAGISKDGQTREHALLAFTLGVKQMICCCNKMDATTPKYSKARYDEIVKEVSSYLKKVGYNPDKIPFVPISGFEGDNMIERSTNLDWYKGPTLLEALDQINDAKRPSDKPLRLPLQDVYKIGGIGTVPVGRVETGVLKPGMVVTFGPTGLTTEVKSVEMHHEALQEALPGDNVGFNVKNVAVKDLKRGFVASNSKDDPAKGAASFTSQVIIMNHPGQIGNGYAPVLDCHTSHIAVKFAEILTKIDRRSGKEIEKEPKFLKNGDAGMVKMIPTKPMVVETFSEYPPLGRFAVRDMRQTVAVGVIKNVDKKDPTGAKVTKAAQKKK</sequence>
<protein>
    <recommendedName>
        <fullName>Elongation factor 1-alpha</fullName>
        <shortName>EF-1-alpha</shortName>
    </recommendedName>
    <alternativeName>
        <fullName>Vitronectin-like adhesion protein 1</fullName>
        <shortName>PVN1</shortName>
    </alternativeName>
</protein>
<accession>P43643</accession>
<comment type="function">
    <text>This protein promotes the GTP-dependent binding of aminoacyl-tRNA to the A-site of ribosomes during protein biosynthesis.</text>
</comment>
<comment type="subcellular location">
    <subcellularLocation>
        <location evidence="3">Cytoplasm</location>
    </subcellularLocation>
    <text evidence="3">Localized in the cell wall of cortical and transmitting tissue cells of pollinated mature styles.</text>
</comment>
<comment type="tissue specificity">
    <text>Was detected in all tissues examined but was most abundant in roots and salt-adapted cultured cells.</text>
</comment>
<comment type="similarity">
    <text evidence="4">Belongs to the TRAFAC class translation factor GTPase superfamily. Classic translation factor GTPase family. EF-Tu/EF-1A subfamily.</text>
</comment>
<evidence type="ECO:0000250" key="1"/>
<evidence type="ECO:0000250" key="2">
    <source>
        <dbReference type="UniProtKB" id="Q8GTY0"/>
    </source>
</evidence>
<evidence type="ECO:0000269" key="3">
    <source>
    </source>
</evidence>
<evidence type="ECO:0000305" key="4"/>
<organism>
    <name type="scientific">Nicotiana tabacum</name>
    <name type="common">Common tobacco</name>
    <dbReference type="NCBI Taxonomy" id="4097"/>
    <lineage>
        <taxon>Eukaryota</taxon>
        <taxon>Viridiplantae</taxon>
        <taxon>Streptophyta</taxon>
        <taxon>Embryophyta</taxon>
        <taxon>Tracheophyta</taxon>
        <taxon>Spermatophyta</taxon>
        <taxon>Magnoliopsida</taxon>
        <taxon>eudicotyledons</taxon>
        <taxon>Gunneridae</taxon>
        <taxon>Pentapetalae</taxon>
        <taxon>asterids</taxon>
        <taxon>lamiids</taxon>
        <taxon>Solanales</taxon>
        <taxon>Solanaceae</taxon>
        <taxon>Nicotianoideae</taxon>
        <taxon>Nicotianeae</taxon>
        <taxon>Nicotiana</taxon>
    </lineage>
</organism>
<name>EF1A_TOBAC</name>